<accession>P35514</accession>
<keyword id="KW-0143">Chaperone</keyword>
<keyword id="KW-0963">Cytoplasm</keyword>
<keyword id="KW-0235">DNA replication</keyword>
<keyword id="KW-0479">Metal-binding</keyword>
<keyword id="KW-1185">Reference proteome</keyword>
<keyword id="KW-0677">Repeat</keyword>
<keyword id="KW-0346">Stress response</keyword>
<keyword id="KW-0862">Zinc</keyword>
<keyword id="KW-0863">Zinc-finger</keyword>
<gene>
    <name evidence="1" type="primary">dnaJ</name>
    <name type="ordered locus">LL2224</name>
    <name type="ORF">L0272</name>
</gene>
<sequence length="379" mass="40671">MNNTEYYERLGVDKNASQDEIKKAYRKMSKKYHPDLNKEEGAEEKYKEVQEAYETLSDEQKRAAYDQYGEAGANGGFGGGGFGGASGFSGFGGGSGGFGGFEDIFSSFFGGGGAQVNPNAPRQGDDLQYRINLKFEEAIFGVEKQVKYNREELCHTCGGSGAKAGTHPETCHKCGGRGQINVVRDTPLGRMQTQVTCDVCNGTGKEIKEKCETCHGSGHEKVAHTVKVTVPAGVETGQKMRLQGQGDAGVNGGPYGDLYVVFQVEASDKFERDGAEIYYKMPMDFVQAALGDEIEVPTVHGNVKLKIPAGTQTGANFRLKGKGAPKLRGSGNGDQYVIINIVTPKNLNQAQKEALQAFAKASGVEVSGSGKKGFFDKFK</sequence>
<dbReference type="EMBL" id="M99413">
    <property type="status" value="NOT_ANNOTATED_CDS"/>
    <property type="molecule type" value="Genomic_DNA"/>
</dbReference>
<dbReference type="EMBL" id="AE005176">
    <property type="protein sequence ID" value="AAK06322.1"/>
    <property type="molecule type" value="Genomic_DNA"/>
</dbReference>
<dbReference type="PIR" id="A47079">
    <property type="entry name" value="A47079"/>
</dbReference>
<dbReference type="PIR" id="H86902">
    <property type="entry name" value="H86902"/>
</dbReference>
<dbReference type="RefSeq" id="NP_268381.1">
    <property type="nucleotide sequence ID" value="NC_002662.1"/>
</dbReference>
<dbReference type="RefSeq" id="WP_010906396.1">
    <property type="nucleotide sequence ID" value="NC_002662.1"/>
</dbReference>
<dbReference type="SMR" id="P35514"/>
<dbReference type="PaxDb" id="272623-L0272"/>
<dbReference type="EnsemblBacteria" id="AAK06322">
    <property type="protein sequence ID" value="AAK06322"/>
    <property type="gene ID" value="L0272"/>
</dbReference>
<dbReference type="GeneID" id="89634564"/>
<dbReference type="KEGG" id="lla:L0272"/>
<dbReference type="PATRIC" id="fig|272623.7.peg.2389"/>
<dbReference type="eggNOG" id="COG0484">
    <property type="taxonomic scope" value="Bacteria"/>
</dbReference>
<dbReference type="HOGENOM" id="CLU_017633_0_0_9"/>
<dbReference type="OrthoDB" id="9779889at2"/>
<dbReference type="Proteomes" id="UP000002196">
    <property type="component" value="Chromosome"/>
</dbReference>
<dbReference type="GO" id="GO:0005737">
    <property type="term" value="C:cytoplasm"/>
    <property type="evidence" value="ECO:0007669"/>
    <property type="project" value="UniProtKB-SubCell"/>
</dbReference>
<dbReference type="GO" id="GO:0005524">
    <property type="term" value="F:ATP binding"/>
    <property type="evidence" value="ECO:0007669"/>
    <property type="project" value="InterPro"/>
</dbReference>
<dbReference type="GO" id="GO:0031072">
    <property type="term" value="F:heat shock protein binding"/>
    <property type="evidence" value="ECO:0007669"/>
    <property type="project" value="InterPro"/>
</dbReference>
<dbReference type="GO" id="GO:0051082">
    <property type="term" value="F:unfolded protein binding"/>
    <property type="evidence" value="ECO:0007669"/>
    <property type="project" value="UniProtKB-UniRule"/>
</dbReference>
<dbReference type="GO" id="GO:0008270">
    <property type="term" value="F:zinc ion binding"/>
    <property type="evidence" value="ECO:0007669"/>
    <property type="project" value="UniProtKB-UniRule"/>
</dbReference>
<dbReference type="GO" id="GO:0051085">
    <property type="term" value="P:chaperone cofactor-dependent protein refolding"/>
    <property type="evidence" value="ECO:0007669"/>
    <property type="project" value="TreeGrafter"/>
</dbReference>
<dbReference type="GO" id="GO:0006260">
    <property type="term" value="P:DNA replication"/>
    <property type="evidence" value="ECO:0007669"/>
    <property type="project" value="UniProtKB-KW"/>
</dbReference>
<dbReference type="GO" id="GO:0042026">
    <property type="term" value="P:protein refolding"/>
    <property type="evidence" value="ECO:0007669"/>
    <property type="project" value="TreeGrafter"/>
</dbReference>
<dbReference type="GO" id="GO:0009408">
    <property type="term" value="P:response to heat"/>
    <property type="evidence" value="ECO:0007669"/>
    <property type="project" value="InterPro"/>
</dbReference>
<dbReference type="CDD" id="cd06257">
    <property type="entry name" value="DnaJ"/>
    <property type="match status" value="1"/>
</dbReference>
<dbReference type="CDD" id="cd10747">
    <property type="entry name" value="DnaJ_C"/>
    <property type="match status" value="1"/>
</dbReference>
<dbReference type="FunFam" id="1.10.287.110:FF:000031">
    <property type="entry name" value="Molecular chaperone DnaJ"/>
    <property type="match status" value="1"/>
</dbReference>
<dbReference type="FunFam" id="2.10.230.10:FF:000002">
    <property type="entry name" value="Molecular chaperone DnaJ"/>
    <property type="match status" value="1"/>
</dbReference>
<dbReference type="FunFam" id="2.60.260.20:FF:000004">
    <property type="entry name" value="Molecular chaperone DnaJ"/>
    <property type="match status" value="1"/>
</dbReference>
<dbReference type="Gene3D" id="1.10.287.110">
    <property type="entry name" value="DnaJ domain"/>
    <property type="match status" value="1"/>
</dbReference>
<dbReference type="Gene3D" id="2.10.230.10">
    <property type="entry name" value="Heat shock protein DnaJ, cysteine-rich domain"/>
    <property type="match status" value="1"/>
</dbReference>
<dbReference type="Gene3D" id="2.60.260.20">
    <property type="entry name" value="Urease metallochaperone UreE, N-terminal domain"/>
    <property type="match status" value="2"/>
</dbReference>
<dbReference type="HAMAP" id="MF_01152">
    <property type="entry name" value="DnaJ"/>
    <property type="match status" value="1"/>
</dbReference>
<dbReference type="InterPro" id="IPR012724">
    <property type="entry name" value="DnaJ"/>
</dbReference>
<dbReference type="InterPro" id="IPR002939">
    <property type="entry name" value="DnaJ_C"/>
</dbReference>
<dbReference type="InterPro" id="IPR001623">
    <property type="entry name" value="DnaJ_domain"/>
</dbReference>
<dbReference type="InterPro" id="IPR018253">
    <property type="entry name" value="DnaJ_domain_CS"/>
</dbReference>
<dbReference type="InterPro" id="IPR008971">
    <property type="entry name" value="HSP40/DnaJ_pept-bd"/>
</dbReference>
<dbReference type="InterPro" id="IPR001305">
    <property type="entry name" value="HSP_DnaJ_Cys-rich_dom"/>
</dbReference>
<dbReference type="InterPro" id="IPR036410">
    <property type="entry name" value="HSP_DnaJ_Cys-rich_dom_sf"/>
</dbReference>
<dbReference type="InterPro" id="IPR036869">
    <property type="entry name" value="J_dom_sf"/>
</dbReference>
<dbReference type="NCBIfam" id="TIGR02349">
    <property type="entry name" value="DnaJ_bact"/>
    <property type="match status" value="1"/>
</dbReference>
<dbReference type="NCBIfam" id="NF008035">
    <property type="entry name" value="PRK10767.1"/>
    <property type="match status" value="1"/>
</dbReference>
<dbReference type="NCBIfam" id="NF010869">
    <property type="entry name" value="PRK14276.1"/>
    <property type="match status" value="1"/>
</dbReference>
<dbReference type="PANTHER" id="PTHR43096:SF48">
    <property type="entry name" value="CHAPERONE PROTEIN DNAJ"/>
    <property type="match status" value="1"/>
</dbReference>
<dbReference type="PANTHER" id="PTHR43096">
    <property type="entry name" value="DNAJ HOMOLOG 1, MITOCHONDRIAL-RELATED"/>
    <property type="match status" value="1"/>
</dbReference>
<dbReference type="Pfam" id="PF00226">
    <property type="entry name" value="DnaJ"/>
    <property type="match status" value="1"/>
</dbReference>
<dbReference type="Pfam" id="PF01556">
    <property type="entry name" value="DnaJ_C"/>
    <property type="match status" value="1"/>
</dbReference>
<dbReference type="Pfam" id="PF00684">
    <property type="entry name" value="DnaJ_CXXCXGXG"/>
    <property type="match status" value="1"/>
</dbReference>
<dbReference type="PRINTS" id="PR00625">
    <property type="entry name" value="JDOMAIN"/>
</dbReference>
<dbReference type="SMART" id="SM00271">
    <property type="entry name" value="DnaJ"/>
    <property type="match status" value="1"/>
</dbReference>
<dbReference type="SUPFAM" id="SSF46565">
    <property type="entry name" value="Chaperone J-domain"/>
    <property type="match status" value="1"/>
</dbReference>
<dbReference type="SUPFAM" id="SSF57938">
    <property type="entry name" value="DnaJ/Hsp40 cysteine-rich domain"/>
    <property type="match status" value="1"/>
</dbReference>
<dbReference type="SUPFAM" id="SSF49493">
    <property type="entry name" value="HSP40/DnaJ peptide-binding domain"/>
    <property type="match status" value="2"/>
</dbReference>
<dbReference type="PROSITE" id="PS00636">
    <property type="entry name" value="DNAJ_1"/>
    <property type="match status" value="1"/>
</dbReference>
<dbReference type="PROSITE" id="PS50076">
    <property type="entry name" value="DNAJ_2"/>
    <property type="match status" value="1"/>
</dbReference>
<dbReference type="PROSITE" id="PS51188">
    <property type="entry name" value="ZF_CR"/>
    <property type="match status" value="1"/>
</dbReference>
<reference key="1">
    <citation type="journal article" date="1993" name="J. Bacteriol.">
        <title>Cloning, nucleotide sequence, and regulatory analysis of the Lactococcus lactis dnaJ gene.</title>
        <authorList>
            <person name="van Asseldonk M."/>
            <person name="Simons A."/>
            <person name="Visser H."/>
            <person name="de Vos W.M."/>
            <person name="Simons G."/>
        </authorList>
    </citation>
    <scope>NUCLEOTIDE SEQUENCE [GENOMIC DNA]</scope>
    <source>
        <strain>NIZO R5</strain>
    </source>
</reference>
<reference key="2">
    <citation type="journal article" date="2001" name="Genome Res.">
        <title>The complete genome sequence of the lactic acid bacterium Lactococcus lactis ssp. lactis IL1403.</title>
        <authorList>
            <person name="Bolotin A."/>
            <person name="Wincker P."/>
            <person name="Mauger S."/>
            <person name="Jaillon O."/>
            <person name="Malarme K."/>
            <person name="Weissenbach J."/>
            <person name="Ehrlich S.D."/>
            <person name="Sorokin A."/>
        </authorList>
    </citation>
    <scope>NUCLEOTIDE SEQUENCE [LARGE SCALE GENOMIC DNA]</scope>
    <source>
        <strain>IL1403</strain>
    </source>
</reference>
<evidence type="ECO:0000255" key="1">
    <source>
        <dbReference type="HAMAP-Rule" id="MF_01152"/>
    </source>
</evidence>
<evidence type="ECO:0000305" key="2"/>
<name>DNAJ_LACLA</name>
<organism>
    <name type="scientific">Lactococcus lactis subsp. lactis (strain IL1403)</name>
    <name type="common">Streptococcus lactis</name>
    <dbReference type="NCBI Taxonomy" id="272623"/>
    <lineage>
        <taxon>Bacteria</taxon>
        <taxon>Bacillati</taxon>
        <taxon>Bacillota</taxon>
        <taxon>Bacilli</taxon>
        <taxon>Lactobacillales</taxon>
        <taxon>Streptococcaceae</taxon>
        <taxon>Lactococcus</taxon>
    </lineage>
</organism>
<comment type="function">
    <text evidence="1">Participates actively in the response to hyperosmotic and heat shock by preventing the aggregation of stress-denatured proteins and by disaggregating proteins, also in an autonomous, DnaK-independent fashion. Unfolded proteins bind initially to DnaJ; upon interaction with the DnaJ-bound protein, DnaK hydrolyzes its bound ATP, resulting in the formation of a stable complex. GrpE releases ADP from DnaK; ATP binding to DnaK triggers the release of the substrate protein, thus completing the reaction cycle. Several rounds of ATP-dependent interactions between DnaJ, DnaK and GrpE are required for fully efficient folding. Also involved, together with DnaK and GrpE, in the DNA replication of plasmids through activation of initiation proteins.</text>
</comment>
<comment type="cofactor">
    <cofactor evidence="1">
        <name>Zn(2+)</name>
        <dbReference type="ChEBI" id="CHEBI:29105"/>
    </cofactor>
    <text evidence="1">Binds 2 Zn(2+) ions per monomer.</text>
</comment>
<comment type="subunit">
    <text evidence="1">Homodimer.</text>
</comment>
<comment type="subcellular location">
    <subcellularLocation>
        <location evidence="1">Cytoplasm</location>
    </subcellularLocation>
</comment>
<comment type="domain">
    <text evidence="1">The J domain is necessary and sufficient to stimulate DnaK ATPase activity. Zinc center 1 plays an important role in the autonomous, DnaK-independent chaperone activity of DnaJ. Zinc center 2 is essential for interaction with DnaK and for DnaJ activity.</text>
</comment>
<comment type="similarity">
    <text evidence="1">Belongs to the DnaJ family.</text>
</comment>
<protein>
    <recommendedName>
        <fullName evidence="1">Chaperone protein DnaJ</fullName>
    </recommendedName>
</protein>
<feature type="chain" id="PRO_0000070802" description="Chaperone protein DnaJ">
    <location>
        <begin position="1"/>
        <end position="379"/>
    </location>
</feature>
<feature type="domain" description="J" evidence="1">
    <location>
        <begin position="5"/>
        <end position="69"/>
    </location>
</feature>
<feature type="repeat" description="CXXCXGXG motif">
    <location>
        <begin position="154"/>
        <end position="161"/>
    </location>
</feature>
<feature type="repeat" description="CXXCXGXG motif">
    <location>
        <begin position="171"/>
        <end position="178"/>
    </location>
</feature>
<feature type="repeat" description="CXXCXGXG motif">
    <location>
        <begin position="197"/>
        <end position="204"/>
    </location>
</feature>
<feature type="repeat" description="CXXCXGXG motif">
    <location>
        <begin position="211"/>
        <end position="218"/>
    </location>
</feature>
<feature type="zinc finger region" description="CR-type" evidence="1">
    <location>
        <begin position="141"/>
        <end position="223"/>
    </location>
</feature>
<feature type="binding site" evidence="1">
    <location>
        <position position="154"/>
    </location>
    <ligand>
        <name>Zn(2+)</name>
        <dbReference type="ChEBI" id="CHEBI:29105"/>
        <label>1</label>
    </ligand>
</feature>
<feature type="binding site" evidence="1">
    <location>
        <position position="157"/>
    </location>
    <ligand>
        <name>Zn(2+)</name>
        <dbReference type="ChEBI" id="CHEBI:29105"/>
        <label>1</label>
    </ligand>
</feature>
<feature type="binding site" evidence="1">
    <location>
        <position position="171"/>
    </location>
    <ligand>
        <name>Zn(2+)</name>
        <dbReference type="ChEBI" id="CHEBI:29105"/>
        <label>2</label>
    </ligand>
</feature>
<feature type="binding site" evidence="1">
    <location>
        <position position="174"/>
    </location>
    <ligand>
        <name>Zn(2+)</name>
        <dbReference type="ChEBI" id="CHEBI:29105"/>
        <label>2</label>
    </ligand>
</feature>
<feature type="binding site" evidence="1">
    <location>
        <position position="197"/>
    </location>
    <ligand>
        <name>Zn(2+)</name>
        <dbReference type="ChEBI" id="CHEBI:29105"/>
        <label>2</label>
    </ligand>
</feature>
<feature type="binding site" evidence="1">
    <location>
        <position position="200"/>
    </location>
    <ligand>
        <name>Zn(2+)</name>
        <dbReference type="ChEBI" id="CHEBI:29105"/>
        <label>2</label>
    </ligand>
</feature>
<feature type="binding site" evidence="1">
    <location>
        <position position="211"/>
    </location>
    <ligand>
        <name>Zn(2+)</name>
        <dbReference type="ChEBI" id="CHEBI:29105"/>
        <label>1</label>
    </ligand>
</feature>
<feature type="binding site" evidence="1">
    <location>
        <position position="214"/>
    </location>
    <ligand>
        <name>Zn(2+)</name>
        <dbReference type="ChEBI" id="CHEBI:29105"/>
        <label>1</label>
    </ligand>
</feature>
<feature type="sequence conflict" description="In Ref. 1." evidence="2" ref="1">
    <original>G</original>
    <variation>S</variation>
    <location>
        <position position="94"/>
    </location>
</feature>
<feature type="sequence conflict" description="In Ref. 1." evidence="2" ref="1">
    <original>A</original>
    <variation>R</variation>
    <location>
        <position position="164"/>
    </location>
</feature>
<proteinExistence type="inferred from homology"/>